<gene>
    <name type="primary">AHA6</name>
    <name type="ordered locus">At2g07560</name>
    <name type="ORF">F9A16.7</name>
</gene>
<feature type="chain" id="PRO_0000046279" description="ATPase 6, plasma membrane-type">
    <location>
        <begin position="1"/>
        <end position="949"/>
    </location>
</feature>
<feature type="topological domain" description="Cytoplasmic" evidence="4">
    <location>
        <begin position="1"/>
        <end position="64"/>
    </location>
</feature>
<feature type="transmembrane region" description="Helical; Name=1" evidence="4">
    <location>
        <begin position="65"/>
        <end position="84"/>
    </location>
</feature>
<feature type="topological domain" description="Extracellular" evidence="4">
    <location>
        <begin position="85"/>
        <end position="96"/>
    </location>
</feature>
<feature type="transmembrane region" description="Helical; Name=2" evidence="4">
    <location>
        <begin position="97"/>
        <end position="117"/>
    </location>
</feature>
<feature type="topological domain" description="Cytoplasmic" evidence="4">
    <location>
        <begin position="118"/>
        <end position="246"/>
    </location>
</feature>
<feature type="transmembrane region" description="Helical; Name=3" evidence="4">
    <location>
        <begin position="247"/>
        <end position="267"/>
    </location>
</feature>
<feature type="topological domain" description="Extracellular" evidence="4">
    <location>
        <begin position="268"/>
        <end position="276"/>
    </location>
</feature>
<feature type="transmembrane region" description="Helical; Name=4" evidence="4">
    <location>
        <begin position="277"/>
        <end position="294"/>
    </location>
</feature>
<feature type="topological domain" description="Cytoplasmic" evidence="4">
    <location>
        <begin position="295"/>
        <end position="645"/>
    </location>
</feature>
<feature type="transmembrane region" description="Helical; Name=5" evidence="4">
    <location>
        <begin position="646"/>
        <end position="667"/>
    </location>
</feature>
<feature type="topological domain" description="Extracellular" evidence="4">
    <location>
        <begin position="668"/>
        <end position="672"/>
    </location>
</feature>
<feature type="transmembrane region" description="Helical; Name=6" evidence="4">
    <location>
        <begin position="673"/>
        <end position="695"/>
    </location>
</feature>
<feature type="topological domain" description="Cytoplasmic" evidence="4">
    <location>
        <begin position="696"/>
        <end position="711"/>
    </location>
</feature>
<feature type="transmembrane region" description="Helical; Name=7" evidence="4">
    <location>
        <begin position="712"/>
        <end position="732"/>
    </location>
</feature>
<feature type="topological domain" description="Extracellular" evidence="4">
    <location>
        <begin position="733"/>
        <end position="753"/>
    </location>
</feature>
<feature type="transmembrane region" description="Helical; Name=8" evidence="4">
    <location>
        <begin position="754"/>
        <end position="774"/>
    </location>
</feature>
<feature type="topological domain" description="Cytoplasmic" evidence="4">
    <location>
        <begin position="775"/>
        <end position="786"/>
    </location>
</feature>
<feature type="transmembrane region" description="Helical; Name=9" evidence="4">
    <location>
        <begin position="787"/>
        <end position="807"/>
    </location>
</feature>
<feature type="topological domain" description="Extracellular" evidence="4">
    <location>
        <begin position="808"/>
        <end position="815"/>
    </location>
</feature>
<feature type="transmembrane region" description="Helical; Name=10" evidence="4">
    <location>
        <begin position="816"/>
        <end position="836"/>
    </location>
</feature>
<feature type="topological domain" description="Cytoplasmic" evidence="4">
    <location>
        <begin position="837"/>
        <end position="949"/>
    </location>
</feature>
<feature type="region of interest" description="Interaction with 14-3-3 proteins" evidence="1">
    <location>
        <begin position="947"/>
        <end position="949"/>
    </location>
</feature>
<feature type="active site" description="4-aspartylphosphate intermediate" evidence="1">
    <location>
        <position position="332"/>
    </location>
</feature>
<feature type="binding site" evidence="1">
    <location>
        <position position="590"/>
    </location>
    <ligand>
        <name>Mg(2+)</name>
        <dbReference type="ChEBI" id="CHEBI:18420"/>
    </ligand>
</feature>
<feature type="binding site" evidence="1">
    <location>
        <position position="594"/>
    </location>
    <ligand>
        <name>Mg(2+)</name>
        <dbReference type="ChEBI" id="CHEBI:18420"/>
    </ligand>
</feature>
<feature type="modified residue" description="Phosphothreonine" evidence="3">
    <location>
        <position position="883"/>
    </location>
</feature>
<feature type="modified residue" description="Phosphoserine" evidence="2">
    <location>
        <position position="931"/>
    </location>
</feature>
<feature type="modified residue" description="Phosphothreonine" evidence="3">
    <location>
        <position position="948"/>
    </location>
</feature>
<reference key="1">
    <citation type="journal article" date="1999" name="Nature">
        <title>Sequence and analysis of chromosome 2 of the plant Arabidopsis thaliana.</title>
        <authorList>
            <person name="Lin X."/>
            <person name="Kaul S."/>
            <person name="Rounsley S.D."/>
            <person name="Shea T.P."/>
            <person name="Benito M.-I."/>
            <person name="Town C.D."/>
            <person name="Fujii C.Y."/>
            <person name="Mason T.M."/>
            <person name="Bowman C.L."/>
            <person name="Barnstead M.E."/>
            <person name="Feldblyum T.V."/>
            <person name="Buell C.R."/>
            <person name="Ketchum K.A."/>
            <person name="Lee J.J."/>
            <person name="Ronning C.M."/>
            <person name="Koo H.L."/>
            <person name="Moffat K.S."/>
            <person name="Cronin L.A."/>
            <person name="Shen M."/>
            <person name="Pai G."/>
            <person name="Van Aken S."/>
            <person name="Umayam L."/>
            <person name="Tallon L.J."/>
            <person name="Gill J.E."/>
            <person name="Adams M.D."/>
            <person name="Carrera A.J."/>
            <person name="Creasy T.H."/>
            <person name="Goodman H.M."/>
            <person name="Somerville C.R."/>
            <person name="Copenhaver G.P."/>
            <person name="Preuss D."/>
            <person name="Nierman W.C."/>
            <person name="White O."/>
            <person name="Eisen J.A."/>
            <person name="Salzberg S.L."/>
            <person name="Fraser C.M."/>
            <person name="Venter J.C."/>
        </authorList>
    </citation>
    <scope>NUCLEOTIDE SEQUENCE [LARGE SCALE GENOMIC DNA]</scope>
    <source>
        <strain>cv. Columbia</strain>
    </source>
</reference>
<reference key="2">
    <citation type="journal article" date="2017" name="Plant J.">
        <title>Araport11: a complete reannotation of the Arabidopsis thaliana reference genome.</title>
        <authorList>
            <person name="Cheng C.Y."/>
            <person name="Krishnakumar V."/>
            <person name="Chan A.P."/>
            <person name="Thibaud-Nissen F."/>
            <person name="Schobel S."/>
            <person name="Town C.D."/>
        </authorList>
    </citation>
    <scope>GENOME REANNOTATION</scope>
    <source>
        <strain>cv. Columbia</strain>
    </source>
</reference>
<reference key="3">
    <citation type="journal article" date="2003" name="Science">
        <title>Empirical analysis of transcriptional activity in the Arabidopsis genome.</title>
        <authorList>
            <person name="Yamada K."/>
            <person name="Lim J."/>
            <person name="Dale J.M."/>
            <person name="Chen H."/>
            <person name="Shinn P."/>
            <person name="Palm C.J."/>
            <person name="Southwick A.M."/>
            <person name="Wu H.C."/>
            <person name="Kim C.J."/>
            <person name="Nguyen M."/>
            <person name="Pham P.K."/>
            <person name="Cheuk R.F."/>
            <person name="Karlin-Newmann G."/>
            <person name="Liu S.X."/>
            <person name="Lam B."/>
            <person name="Sakano H."/>
            <person name="Wu T."/>
            <person name="Yu G."/>
            <person name="Miranda M."/>
            <person name="Quach H.L."/>
            <person name="Tripp M."/>
            <person name="Chang C.H."/>
            <person name="Lee J.M."/>
            <person name="Toriumi M.J."/>
            <person name="Chan M.M."/>
            <person name="Tang C.C."/>
            <person name="Onodera C.S."/>
            <person name="Deng J.M."/>
            <person name="Akiyama K."/>
            <person name="Ansari Y."/>
            <person name="Arakawa T."/>
            <person name="Banh J."/>
            <person name="Banno F."/>
            <person name="Bowser L."/>
            <person name="Brooks S.Y."/>
            <person name="Carninci P."/>
            <person name="Chao Q."/>
            <person name="Choy N."/>
            <person name="Enju A."/>
            <person name="Goldsmith A.D."/>
            <person name="Gurjal M."/>
            <person name="Hansen N.F."/>
            <person name="Hayashizaki Y."/>
            <person name="Johnson-Hopson C."/>
            <person name="Hsuan V.W."/>
            <person name="Iida K."/>
            <person name="Karnes M."/>
            <person name="Khan S."/>
            <person name="Koesema E."/>
            <person name="Ishida J."/>
            <person name="Jiang P.X."/>
            <person name="Jones T."/>
            <person name="Kawai J."/>
            <person name="Kamiya A."/>
            <person name="Meyers C."/>
            <person name="Nakajima M."/>
            <person name="Narusaka M."/>
            <person name="Seki M."/>
            <person name="Sakurai T."/>
            <person name="Satou M."/>
            <person name="Tamse R."/>
            <person name="Vaysberg M."/>
            <person name="Wallender E.K."/>
            <person name="Wong C."/>
            <person name="Yamamura Y."/>
            <person name="Yuan S."/>
            <person name="Shinozaki K."/>
            <person name="Davis R.W."/>
            <person name="Theologis A."/>
            <person name="Ecker J.R."/>
        </authorList>
    </citation>
    <scope>NUCLEOTIDE SEQUENCE [LARGE SCALE MRNA] OF 616-949</scope>
    <source>
        <strain>cv. Columbia</strain>
    </source>
</reference>
<reference key="4">
    <citation type="journal article" date="2005" name="Plant Cell Physiol.">
        <title>Biochemical characterization of plasma membrane H+-ATPase activation in guard cell protoplasts of Arabidopsis thaliana in response to blue light.</title>
        <authorList>
            <person name="Ueno K."/>
            <person name="Kinoshita T."/>
            <person name="Inoue S."/>
            <person name="Emi T."/>
            <person name="Shimazaki K."/>
        </authorList>
    </citation>
    <scope>TISSUE SPECIFICITY</scope>
    <source>
        <strain>cv. Columbia GL1</strain>
    </source>
</reference>
<name>PMA6_ARATH</name>
<evidence type="ECO:0000250" key="1"/>
<evidence type="ECO:0000250" key="2">
    <source>
        <dbReference type="UniProtKB" id="P19456"/>
    </source>
</evidence>
<evidence type="ECO:0000250" key="3">
    <source>
        <dbReference type="UniProtKB" id="P20431"/>
    </source>
</evidence>
<evidence type="ECO:0000255" key="4"/>
<evidence type="ECO:0000269" key="5">
    <source>
    </source>
</evidence>
<evidence type="ECO:0000305" key="6"/>
<protein>
    <recommendedName>
        <fullName>ATPase 6, plasma membrane-type</fullName>
        <ecNumber>7.1.2.1</ecNumber>
    </recommendedName>
    <alternativeName>
        <fullName>Proton pump 6</fullName>
    </alternativeName>
</protein>
<organism>
    <name type="scientific">Arabidopsis thaliana</name>
    <name type="common">Mouse-ear cress</name>
    <dbReference type="NCBI Taxonomy" id="3702"/>
    <lineage>
        <taxon>Eukaryota</taxon>
        <taxon>Viridiplantae</taxon>
        <taxon>Streptophyta</taxon>
        <taxon>Embryophyta</taxon>
        <taxon>Tracheophyta</taxon>
        <taxon>Spermatophyta</taxon>
        <taxon>Magnoliopsida</taxon>
        <taxon>eudicotyledons</taxon>
        <taxon>Gunneridae</taxon>
        <taxon>Pentapetalae</taxon>
        <taxon>rosids</taxon>
        <taxon>malvids</taxon>
        <taxon>Brassicales</taxon>
        <taxon>Brassicaceae</taxon>
        <taxon>Camelineae</taxon>
        <taxon>Arabidopsis</taxon>
    </lineage>
</organism>
<accession>Q9SH76</accession>
<accession>Q84WR5</accession>
<comment type="function">
    <text evidence="1">The plasma membrane H(+) ATPase of plants and fungi generates a proton gradient that drives the active transport of nutrients by H(+)-symport. The resulting external acidification and/or internal alkinization may mediate growth responses (By similarity).</text>
</comment>
<comment type="catalytic activity">
    <reaction>
        <text>ATP + H2O + H(+)(in) = ADP + phosphate + 2 H(+)(out)</text>
        <dbReference type="Rhea" id="RHEA:20852"/>
        <dbReference type="ChEBI" id="CHEBI:15377"/>
        <dbReference type="ChEBI" id="CHEBI:15378"/>
        <dbReference type="ChEBI" id="CHEBI:30616"/>
        <dbReference type="ChEBI" id="CHEBI:43474"/>
        <dbReference type="ChEBI" id="CHEBI:456216"/>
        <dbReference type="EC" id="7.1.2.1"/>
    </reaction>
</comment>
<comment type="subunit">
    <text evidence="1">Binds to 14-3-3 proteins. The binding is induced by phosphorylation of Thr-948. Binding to 14-3-3 proteins activates the H(+)-ATPase (By similarity).</text>
</comment>
<comment type="subcellular location">
    <subcellularLocation>
        <location>Membrane</location>
        <topology>Multi-pass membrane protein</topology>
    </subcellularLocation>
</comment>
<comment type="tissue specificity">
    <text evidence="5">Expressed in guard cells.</text>
</comment>
<comment type="similarity">
    <text evidence="6">Belongs to the cation transport ATPase (P-type) (TC 3.A.3) family. Type IIIA subfamily.</text>
</comment>
<keyword id="KW-0067">ATP-binding</keyword>
<keyword id="KW-0375">Hydrogen ion transport</keyword>
<keyword id="KW-0406">Ion transport</keyword>
<keyword id="KW-0460">Magnesium</keyword>
<keyword id="KW-0472">Membrane</keyword>
<keyword id="KW-0479">Metal-binding</keyword>
<keyword id="KW-0547">Nucleotide-binding</keyword>
<keyword id="KW-0597">Phosphoprotein</keyword>
<keyword id="KW-1185">Reference proteome</keyword>
<keyword id="KW-1278">Translocase</keyword>
<keyword id="KW-0812">Transmembrane</keyword>
<keyword id="KW-1133">Transmembrane helix</keyword>
<keyword id="KW-0813">Transport</keyword>
<proteinExistence type="evidence at transcript level"/>
<sequence length="949" mass="105012">MAADISWDEIKKENVDLEKIPVDEVFQQLKCSREGLSSEEGRNRLQIFGANKLEEKVENKFLKFLGFMWNPLSWVMEAAAIMAIVLANGGGRPPDWQDFVGITCLLIINSTISFIEENNAGNAAAALMANLAPKTKVLRDGRWGEQEAAILVPGDLISIKLGDIVPADARLLEGDPLKIDQSALTGESLPATKHQGDEVFSGSTCKQGEIEAVVIATGVHTFFGKAAHLVDSTNNVGHFQKVLTAIGNFCICSIGIGMLIEIIIMYPIQHRKYRDGIDNLLVLLIGGIPIAMPTVLSVTMAIGSHRLSQQGAITKRMTAIEEMAGMDVLCSDKTGTLTLNKLTVDKNLIEVFSKDVDKDYVILLSARASRVENQDAIDTSIVNMLGDPKEARAGITEVHFLPFNPVEKRTAITYIDTNGEWHRCSKGAPEQIIELCDLKGETKRRAHEIIDKFAERGLRSLGVARQRVPEKDKESAGTPWEFVGLLPLFDPPRHDSAETIRRALDLGVNVKMITGDQLAIGKETGRRLGMGTNMYPSSSLLENKDDTTGGVPVDELIEKADGFAGVFPEHKYEIVRKLQERKHIVGMTGDGVNDAPALKKADIGIAVDDATDAARSASDIVLTEPGLSVIVSAVLTSRAIFQRMKNYTIYAVSITIRIVLGFMLVALIWEFDFSPFMVLIIAILNDGTIMTISKDRVKPSPIPDSWKLKEIFATGVVLGTYMALVTVVFFWLAHDTTFFSDKFGVRSLQGKDEELIAVLYLQVSIISQALIFVTRSRSWSFVERPGLLLLIAFFVAQLIATLIATYAHWEFARIKGCGWGWCGVIWIYSIVTYIPLDILKFITRYTLSGKAWNNMIENRTAFTTKKDYGRGEREAQWALAQRTLHGLKPPESMFEDTATYTELSEIAEQAKKRAEVARLREVHTLKGHVESVVKLKGLDIDNLNQHYTV</sequence>
<dbReference type="EC" id="7.1.2.1"/>
<dbReference type="EMBL" id="AC007662">
    <property type="protein sequence ID" value="AAD32758.1"/>
    <property type="molecule type" value="Genomic_DNA"/>
</dbReference>
<dbReference type="EMBL" id="CP002685">
    <property type="protein sequence ID" value="AEC06056.1"/>
    <property type="molecule type" value="Genomic_DNA"/>
</dbReference>
<dbReference type="EMBL" id="BT002855">
    <property type="protein sequence ID" value="AAO22672.1"/>
    <property type="molecule type" value="mRNA"/>
</dbReference>
<dbReference type="PIR" id="G84486">
    <property type="entry name" value="G84486"/>
</dbReference>
<dbReference type="RefSeq" id="NP_178762.1">
    <property type="nucleotide sequence ID" value="NM_126721.3"/>
</dbReference>
<dbReference type="SMR" id="Q9SH76"/>
<dbReference type="BioGRID" id="719">
    <property type="interactions" value="2"/>
</dbReference>
<dbReference type="FunCoup" id="Q9SH76">
    <property type="interactions" value="222"/>
</dbReference>
<dbReference type="IntAct" id="Q9SH76">
    <property type="interactions" value="1"/>
</dbReference>
<dbReference type="STRING" id="3702.Q9SH76"/>
<dbReference type="TCDB" id="3.A.3.3.8">
    <property type="family name" value="the p-type atpase (p-atpase) superfamily"/>
</dbReference>
<dbReference type="iPTMnet" id="Q9SH76"/>
<dbReference type="PaxDb" id="3702-AT2G07560.1"/>
<dbReference type="ProteomicsDB" id="226278"/>
<dbReference type="EnsemblPlants" id="AT2G07560.1">
    <property type="protein sequence ID" value="AT2G07560.1"/>
    <property type="gene ID" value="AT2G07560"/>
</dbReference>
<dbReference type="GeneID" id="815329"/>
<dbReference type="Gramene" id="AT2G07560.1">
    <property type="protein sequence ID" value="AT2G07560.1"/>
    <property type="gene ID" value="AT2G07560"/>
</dbReference>
<dbReference type="KEGG" id="ath:AT2G07560"/>
<dbReference type="Araport" id="AT2G07560"/>
<dbReference type="TAIR" id="AT2G07560">
    <property type="gene designation" value="HA6"/>
</dbReference>
<dbReference type="eggNOG" id="KOG0205">
    <property type="taxonomic scope" value="Eukaryota"/>
</dbReference>
<dbReference type="HOGENOM" id="CLU_002360_6_4_1"/>
<dbReference type="InParanoid" id="Q9SH76"/>
<dbReference type="OMA" id="IELCNMG"/>
<dbReference type="PhylomeDB" id="Q9SH76"/>
<dbReference type="BioCyc" id="ARA:AT2G07560-MONOMER"/>
<dbReference type="PRO" id="PR:Q9SH76"/>
<dbReference type="Proteomes" id="UP000006548">
    <property type="component" value="Chromosome 2"/>
</dbReference>
<dbReference type="ExpressionAtlas" id="Q9SH76">
    <property type="expression patterns" value="baseline and differential"/>
</dbReference>
<dbReference type="GO" id="GO:0005886">
    <property type="term" value="C:plasma membrane"/>
    <property type="evidence" value="ECO:0007005"/>
    <property type="project" value="TAIR"/>
</dbReference>
<dbReference type="GO" id="GO:0005524">
    <property type="term" value="F:ATP binding"/>
    <property type="evidence" value="ECO:0007669"/>
    <property type="project" value="UniProtKB-KW"/>
</dbReference>
<dbReference type="GO" id="GO:0016887">
    <property type="term" value="F:ATP hydrolysis activity"/>
    <property type="evidence" value="ECO:0007669"/>
    <property type="project" value="InterPro"/>
</dbReference>
<dbReference type="GO" id="GO:0046872">
    <property type="term" value="F:metal ion binding"/>
    <property type="evidence" value="ECO:0007669"/>
    <property type="project" value="UniProtKB-KW"/>
</dbReference>
<dbReference type="GO" id="GO:0008553">
    <property type="term" value="F:P-type proton-exporting transporter activity"/>
    <property type="evidence" value="ECO:0007669"/>
    <property type="project" value="UniProtKB-EC"/>
</dbReference>
<dbReference type="GO" id="GO:0120029">
    <property type="term" value="P:proton export across plasma membrane"/>
    <property type="evidence" value="ECO:0007669"/>
    <property type="project" value="InterPro"/>
</dbReference>
<dbReference type="CDD" id="cd02076">
    <property type="entry name" value="P-type_ATPase_H"/>
    <property type="match status" value="1"/>
</dbReference>
<dbReference type="FunFam" id="1.20.1110.10:FF:000045">
    <property type="entry name" value="ATPase 4 plasma membrane-type"/>
    <property type="match status" value="1"/>
</dbReference>
<dbReference type="FunFam" id="2.70.150.10:FF:000004">
    <property type="entry name" value="Plasma membrane ATPase"/>
    <property type="match status" value="1"/>
</dbReference>
<dbReference type="FunFam" id="3.40.1110.10:FF:000004">
    <property type="entry name" value="Plasma membrane ATPase"/>
    <property type="match status" value="1"/>
</dbReference>
<dbReference type="FunFam" id="3.40.50.1000:FF:000211">
    <property type="entry name" value="Plasma membrane ATPase"/>
    <property type="match status" value="1"/>
</dbReference>
<dbReference type="Gene3D" id="6.10.140.890">
    <property type="match status" value="1"/>
</dbReference>
<dbReference type="Gene3D" id="3.40.1110.10">
    <property type="entry name" value="Calcium-transporting ATPase, cytoplasmic domain N"/>
    <property type="match status" value="1"/>
</dbReference>
<dbReference type="Gene3D" id="2.70.150.10">
    <property type="entry name" value="Calcium-transporting ATPase, cytoplasmic transduction domain A"/>
    <property type="match status" value="1"/>
</dbReference>
<dbReference type="Gene3D" id="1.20.1110.10">
    <property type="entry name" value="Calcium-transporting ATPase, transmembrane domain"/>
    <property type="match status" value="1"/>
</dbReference>
<dbReference type="Gene3D" id="3.40.50.1000">
    <property type="entry name" value="HAD superfamily/HAD-like"/>
    <property type="match status" value="1"/>
</dbReference>
<dbReference type="InterPro" id="IPR004014">
    <property type="entry name" value="ATPase_P-typ_cation-transptr_N"/>
</dbReference>
<dbReference type="InterPro" id="IPR023299">
    <property type="entry name" value="ATPase_P-typ_cyto_dom_N"/>
</dbReference>
<dbReference type="InterPro" id="IPR018303">
    <property type="entry name" value="ATPase_P-typ_P_site"/>
</dbReference>
<dbReference type="InterPro" id="IPR023298">
    <property type="entry name" value="ATPase_P-typ_TM_dom_sf"/>
</dbReference>
<dbReference type="InterPro" id="IPR008250">
    <property type="entry name" value="ATPase_P-typ_transduc_dom_A_sf"/>
</dbReference>
<dbReference type="InterPro" id="IPR036412">
    <property type="entry name" value="HAD-like_sf"/>
</dbReference>
<dbReference type="InterPro" id="IPR023214">
    <property type="entry name" value="HAD_sf"/>
</dbReference>
<dbReference type="InterPro" id="IPR006534">
    <property type="entry name" value="P-type_ATPase_IIIA"/>
</dbReference>
<dbReference type="InterPro" id="IPR001757">
    <property type="entry name" value="P_typ_ATPase"/>
</dbReference>
<dbReference type="InterPro" id="IPR044492">
    <property type="entry name" value="P_typ_ATPase_HD_dom"/>
</dbReference>
<dbReference type="NCBIfam" id="TIGR01647">
    <property type="entry name" value="ATPase-IIIA_H"/>
    <property type="match status" value="1"/>
</dbReference>
<dbReference type="NCBIfam" id="TIGR01494">
    <property type="entry name" value="ATPase_P-type"/>
    <property type="match status" value="2"/>
</dbReference>
<dbReference type="PANTHER" id="PTHR42861">
    <property type="entry name" value="CALCIUM-TRANSPORTING ATPASE"/>
    <property type="match status" value="1"/>
</dbReference>
<dbReference type="Pfam" id="PF00690">
    <property type="entry name" value="Cation_ATPase_N"/>
    <property type="match status" value="1"/>
</dbReference>
<dbReference type="Pfam" id="PF00122">
    <property type="entry name" value="E1-E2_ATPase"/>
    <property type="match status" value="1"/>
</dbReference>
<dbReference type="Pfam" id="PF00702">
    <property type="entry name" value="Hydrolase"/>
    <property type="match status" value="1"/>
</dbReference>
<dbReference type="PRINTS" id="PR00119">
    <property type="entry name" value="CATATPASE"/>
</dbReference>
<dbReference type="PRINTS" id="PR00120">
    <property type="entry name" value="HATPASE"/>
</dbReference>
<dbReference type="SFLD" id="SFLDG00002">
    <property type="entry name" value="C1.7:_P-type_atpase_like"/>
    <property type="match status" value="1"/>
</dbReference>
<dbReference type="SFLD" id="SFLDF00027">
    <property type="entry name" value="p-type_atpase"/>
    <property type="match status" value="1"/>
</dbReference>
<dbReference type="SMART" id="SM00831">
    <property type="entry name" value="Cation_ATPase_N"/>
    <property type="match status" value="1"/>
</dbReference>
<dbReference type="SUPFAM" id="SSF81653">
    <property type="entry name" value="Calcium ATPase, transduction domain A"/>
    <property type="match status" value="1"/>
</dbReference>
<dbReference type="SUPFAM" id="SSF81665">
    <property type="entry name" value="Calcium ATPase, transmembrane domain M"/>
    <property type="match status" value="1"/>
</dbReference>
<dbReference type="SUPFAM" id="SSF56784">
    <property type="entry name" value="HAD-like"/>
    <property type="match status" value="1"/>
</dbReference>
<dbReference type="PROSITE" id="PS00154">
    <property type="entry name" value="ATPASE_E1_E2"/>
    <property type="match status" value="1"/>
</dbReference>